<accession>Q758T3</accession>
<evidence type="ECO:0000250" key="1"/>
<evidence type="ECO:0000255" key="2">
    <source>
        <dbReference type="PROSITE-ProRule" id="PRU00723"/>
    </source>
</evidence>
<evidence type="ECO:0000305" key="3"/>
<sequence length="209" mass="24426">MSLVHPDTSNYPFRFAPFLRQEYSFSLDPDRPVCQYYNSKEGASSCPNGTLCPNKHVLPIFQNKIVCKHWLRGLCKKNDQCEYLHEYNLRKMPECVFFTKNGYCTQSPECQYLHIDPTSKVQQCEDYRMGFCPLGTACPCKHVKKIICPKYVTGFCPLGRDCDWEHPPFYVPNELSKIRIKRDDEINTKKLDEEKERRLNAIINGELVI</sequence>
<feature type="chain" id="PRO_0000238531" description="mRNA 3'-end-processing protein YTH1">
    <location>
        <begin position="1"/>
        <end position="209"/>
    </location>
</feature>
<feature type="zinc finger region" description="C3H1-type 1" evidence="2">
    <location>
        <begin position="28"/>
        <end position="59"/>
    </location>
</feature>
<feature type="zinc finger region" description="C3H1-type 2" evidence="2">
    <location>
        <begin position="61"/>
        <end position="88"/>
    </location>
</feature>
<feature type="zinc finger region" description="C3H1-type 3" evidence="2">
    <location>
        <begin position="89"/>
        <end position="117"/>
    </location>
</feature>
<feature type="zinc finger region" description="C3H1-type 4" evidence="2">
    <location>
        <begin position="118"/>
        <end position="145"/>
    </location>
</feature>
<feature type="zinc finger region" description="C3H1-type 5" evidence="2">
    <location>
        <begin position="147"/>
        <end position="169"/>
    </location>
</feature>
<protein>
    <recommendedName>
        <fullName>mRNA 3'-end-processing protein YTH1</fullName>
    </recommendedName>
</protein>
<proteinExistence type="inferred from homology"/>
<comment type="function">
    <text evidence="1">Component of the cleavage factor I (CF I) involved in pre-mRNA 3'-end processing.</text>
</comment>
<comment type="subcellular location">
    <subcellularLocation>
        <location evidence="1">Nucleus</location>
    </subcellularLocation>
</comment>
<comment type="similarity">
    <text evidence="3">Belongs to the CPSF4/YTH1 family.</text>
</comment>
<dbReference type="EMBL" id="AE016818">
    <property type="protein sequence ID" value="AAS52353.1"/>
    <property type="molecule type" value="Genomic_DNA"/>
</dbReference>
<dbReference type="RefSeq" id="NP_984529.1">
    <property type="nucleotide sequence ID" value="NM_209882.1"/>
</dbReference>
<dbReference type="SMR" id="Q758T3"/>
<dbReference type="FunCoup" id="Q758T3">
    <property type="interactions" value="101"/>
</dbReference>
<dbReference type="STRING" id="284811.Q758T3"/>
<dbReference type="EnsemblFungi" id="AAS52353">
    <property type="protein sequence ID" value="AAS52353"/>
    <property type="gene ID" value="AGOS_AEL331W"/>
</dbReference>
<dbReference type="GeneID" id="4620699"/>
<dbReference type="KEGG" id="ago:AGOS_AEL331W"/>
<dbReference type="eggNOG" id="KOG1040">
    <property type="taxonomic scope" value="Eukaryota"/>
</dbReference>
<dbReference type="HOGENOM" id="CLU_024513_1_2_1"/>
<dbReference type="InParanoid" id="Q758T3"/>
<dbReference type="OMA" id="SLVCKHY"/>
<dbReference type="OrthoDB" id="1914176at2759"/>
<dbReference type="Proteomes" id="UP000000591">
    <property type="component" value="Chromosome V"/>
</dbReference>
<dbReference type="GO" id="GO:0005829">
    <property type="term" value="C:cytosol"/>
    <property type="evidence" value="ECO:0007669"/>
    <property type="project" value="EnsemblFungi"/>
</dbReference>
<dbReference type="GO" id="GO:0005847">
    <property type="term" value="C:mRNA cleavage and polyadenylation specificity factor complex"/>
    <property type="evidence" value="ECO:0007669"/>
    <property type="project" value="EnsemblFungi"/>
</dbReference>
<dbReference type="GO" id="GO:0003723">
    <property type="term" value="F:RNA binding"/>
    <property type="evidence" value="ECO:0007669"/>
    <property type="project" value="UniProtKB-KW"/>
</dbReference>
<dbReference type="GO" id="GO:0008270">
    <property type="term" value="F:zinc ion binding"/>
    <property type="evidence" value="ECO:0007669"/>
    <property type="project" value="UniProtKB-KW"/>
</dbReference>
<dbReference type="GO" id="GO:0006397">
    <property type="term" value="P:mRNA processing"/>
    <property type="evidence" value="ECO:0007669"/>
    <property type="project" value="UniProtKB-KW"/>
</dbReference>
<dbReference type="FunFam" id="4.10.1000.10:FF:000012">
    <property type="entry name" value="cleavage and polyadenylation specificity factor subunit 4"/>
    <property type="match status" value="1"/>
</dbReference>
<dbReference type="Gene3D" id="4.10.1000.10">
    <property type="entry name" value="Zinc finger, CCCH-type"/>
    <property type="match status" value="2"/>
</dbReference>
<dbReference type="InterPro" id="IPR045348">
    <property type="entry name" value="CPSF4/Yth1"/>
</dbReference>
<dbReference type="InterPro" id="IPR000571">
    <property type="entry name" value="Znf_CCCH"/>
</dbReference>
<dbReference type="InterPro" id="IPR036855">
    <property type="entry name" value="Znf_CCCH_sf"/>
</dbReference>
<dbReference type="PANTHER" id="PTHR23102:SF24">
    <property type="entry name" value="CLEAVAGE AND POLYADENYLATION SPECIFICITY FACTOR SUBUNIT 4"/>
    <property type="match status" value="1"/>
</dbReference>
<dbReference type="PANTHER" id="PTHR23102">
    <property type="entry name" value="CLEAVAGE AND POLYADENYLATION SPECIFICITY FACTOR SUBUNIT 4-RELATED"/>
    <property type="match status" value="1"/>
</dbReference>
<dbReference type="SMART" id="SM00356">
    <property type="entry name" value="ZnF_C3H1"/>
    <property type="match status" value="5"/>
</dbReference>
<dbReference type="SUPFAM" id="SSF90229">
    <property type="entry name" value="CCCH zinc finger"/>
    <property type="match status" value="2"/>
</dbReference>
<dbReference type="PROSITE" id="PS50103">
    <property type="entry name" value="ZF_C3H1"/>
    <property type="match status" value="5"/>
</dbReference>
<name>YTH1_EREGS</name>
<reference key="1">
    <citation type="journal article" date="2004" name="Science">
        <title>The Ashbya gossypii genome as a tool for mapping the ancient Saccharomyces cerevisiae genome.</title>
        <authorList>
            <person name="Dietrich F.S."/>
            <person name="Voegeli S."/>
            <person name="Brachat S."/>
            <person name="Lerch A."/>
            <person name="Gates K."/>
            <person name="Steiner S."/>
            <person name="Mohr C."/>
            <person name="Poehlmann R."/>
            <person name="Luedi P."/>
            <person name="Choi S."/>
            <person name="Wing R.A."/>
            <person name="Flavier A."/>
            <person name="Gaffney T.D."/>
            <person name="Philippsen P."/>
        </authorList>
    </citation>
    <scope>NUCLEOTIDE SEQUENCE [LARGE SCALE GENOMIC DNA]</scope>
    <source>
        <strain>ATCC 10895 / CBS 109.51 / FGSC 9923 / NRRL Y-1056</strain>
    </source>
</reference>
<reference key="2">
    <citation type="journal article" date="2013" name="G3 (Bethesda)">
        <title>Genomes of Ashbya fungi isolated from insects reveal four mating-type loci, numerous translocations, lack of transposons, and distinct gene duplications.</title>
        <authorList>
            <person name="Dietrich F.S."/>
            <person name="Voegeli S."/>
            <person name="Kuo S."/>
            <person name="Philippsen P."/>
        </authorList>
    </citation>
    <scope>GENOME REANNOTATION</scope>
    <source>
        <strain>ATCC 10895 / CBS 109.51 / FGSC 9923 / NRRL Y-1056</strain>
    </source>
</reference>
<gene>
    <name type="primary">YTH1</name>
    <name type="ordered locus">AEL331W</name>
</gene>
<keyword id="KW-0479">Metal-binding</keyword>
<keyword id="KW-0507">mRNA processing</keyword>
<keyword id="KW-0539">Nucleus</keyword>
<keyword id="KW-1185">Reference proteome</keyword>
<keyword id="KW-0677">Repeat</keyword>
<keyword id="KW-0694">RNA-binding</keyword>
<keyword id="KW-0862">Zinc</keyword>
<keyword id="KW-0863">Zinc-finger</keyword>
<organism>
    <name type="scientific">Eremothecium gossypii (strain ATCC 10895 / CBS 109.51 / FGSC 9923 / NRRL Y-1056)</name>
    <name type="common">Yeast</name>
    <name type="synonym">Ashbya gossypii</name>
    <dbReference type="NCBI Taxonomy" id="284811"/>
    <lineage>
        <taxon>Eukaryota</taxon>
        <taxon>Fungi</taxon>
        <taxon>Dikarya</taxon>
        <taxon>Ascomycota</taxon>
        <taxon>Saccharomycotina</taxon>
        <taxon>Saccharomycetes</taxon>
        <taxon>Saccharomycetales</taxon>
        <taxon>Saccharomycetaceae</taxon>
        <taxon>Eremothecium</taxon>
    </lineage>
</organism>